<gene>
    <name type="ordered locus">BPP1075</name>
</gene>
<organism>
    <name type="scientific">Bordetella parapertussis (strain 12822 / ATCC BAA-587 / NCTC 13253)</name>
    <dbReference type="NCBI Taxonomy" id="257311"/>
    <lineage>
        <taxon>Bacteria</taxon>
        <taxon>Pseudomonadati</taxon>
        <taxon>Pseudomonadota</taxon>
        <taxon>Betaproteobacteria</taxon>
        <taxon>Burkholderiales</taxon>
        <taxon>Alcaligenaceae</taxon>
        <taxon>Bordetella</taxon>
    </lineage>
</organism>
<dbReference type="EMBL" id="BX640426">
    <property type="protein sequence ID" value="CAE36376.1"/>
    <property type="molecule type" value="Genomic_DNA"/>
</dbReference>
<dbReference type="RefSeq" id="WP_003809237.1">
    <property type="nucleotide sequence ID" value="NC_002928.3"/>
</dbReference>
<dbReference type="SMR" id="Q7WBD0"/>
<dbReference type="KEGG" id="bpa:BPP1075"/>
<dbReference type="HOGENOM" id="CLU_064263_0_0_4"/>
<dbReference type="Proteomes" id="UP000001421">
    <property type="component" value="Chromosome"/>
</dbReference>
<dbReference type="Gene3D" id="3.20.20.150">
    <property type="entry name" value="Divalent-metal-dependent TIM barrel enzymes"/>
    <property type="match status" value="1"/>
</dbReference>
<dbReference type="HAMAP" id="MF_00697">
    <property type="entry name" value="UPF0276"/>
    <property type="match status" value="1"/>
</dbReference>
<dbReference type="InterPro" id="IPR007801">
    <property type="entry name" value="MbnB/TglH/ChrH"/>
</dbReference>
<dbReference type="InterPro" id="IPR036237">
    <property type="entry name" value="Xyl_isomerase-like_sf"/>
</dbReference>
<dbReference type="NCBIfam" id="NF003818">
    <property type="entry name" value="PRK05409.1"/>
    <property type="match status" value="1"/>
</dbReference>
<dbReference type="PANTHER" id="PTHR42194">
    <property type="entry name" value="UPF0276 PROTEIN HI_1600"/>
    <property type="match status" value="1"/>
</dbReference>
<dbReference type="PANTHER" id="PTHR42194:SF1">
    <property type="entry name" value="UPF0276 PROTEIN HI_1600"/>
    <property type="match status" value="1"/>
</dbReference>
<dbReference type="Pfam" id="PF05114">
    <property type="entry name" value="MbnB_TglH_ChrH"/>
    <property type="match status" value="1"/>
</dbReference>
<dbReference type="SUPFAM" id="SSF51658">
    <property type="entry name" value="Xylose isomerase-like"/>
    <property type="match status" value="1"/>
</dbReference>
<feature type="chain" id="PRO_0000192691" description="UPF0276 protein BPP1075">
    <location>
        <begin position="1"/>
        <end position="289"/>
    </location>
</feature>
<evidence type="ECO:0000255" key="1">
    <source>
        <dbReference type="HAMAP-Rule" id="MF_00697"/>
    </source>
</evidence>
<comment type="similarity">
    <text evidence="1">Belongs to the UPF0276 family.</text>
</comment>
<accession>Q7WBD0</accession>
<protein>
    <recommendedName>
        <fullName evidence="1">UPF0276 protein BPP1075</fullName>
    </recommendedName>
</protein>
<reference key="1">
    <citation type="journal article" date="2003" name="Nat. Genet.">
        <title>Comparative analysis of the genome sequences of Bordetella pertussis, Bordetella parapertussis and Bordetella bronchiseptica.</title>
        <authorList>
            <person name="Parkhill J."/>
            <person name="Sebaihia M."/>
            <person name="Preston A."/>
            <person name="Murphy L.D."/>
            <person name="Thomson N.R."/>
            <person name="Harris D.E."/>
            <person name="Holden M.T.G."/>
            <person name="Churcher C.M."/>
            <person name="Bentley S.D."/>
            <person name="Mungall K.L."/>
            <person name="Cerdeno-Tarraga A.-M."/>
            <person name="Temple L."/>
            <person name="James K.D."/>
            <person name="Harris B."/>
            <person name="Quail M.A."/>
            <person name="Achtman M."/>
            <person name="Atkin R."/>
            <person name="Baker S."/>
            <person name="Basham D."/>
            <person name="Bason N."/>
            <person name="Cherevach I."/>
            <person name="Chillingworth T."/>
            <person name="Collins M."/>
            <person name="Cronin A."/>
            <person name="Davis P."/>
            <person name="Doggett J."/>
            <person name="Feltwell T."/>
            <person name="Goble A."/>
            <person name="Hamlin N."/>
            <person name="Hauser H."/>
            <person name="Holroyd S."/>
            <person name="Jagels K."/>
            <person name="Leather S."/>
            <person name="Moule S."/>
            <person name="Norberczak H."/>
            <person name="O'Neil S."/>
            <person name="Ormond D."/>
            <person name="Price C."/>
            <person name="Rabbinowitsch E."/>
            <person name="Rutter S."/>
            <person name="Sanders M."/>
            <person name="Saunders D."/>
            <person name="Seeger K."/>
            <person name="Sharp S."/>
            <person name="Simmonds M."/>
            <person name="Skelton J."/>
            <person name="Squares R."/>
            <person name="Squares S."/>
            <person name="Stevens K."/>
            <person name="Unwin L."/>
            <person name="Whitehead S."/>
            <person name="Barrell B.G."/>
            <person name="Maskell D.J."/>
        </authorList>
    </citation>
    <scope>NUCLEOTIDE SEQUENCE [LARGE SCALE GENOMIC DNA]</scope>
    <source>
        <strain>12822 / ATCC BAA-587 / NCTC 13253</strain>
    </source>
</reference>
<name>Y1075_BORPA</name>
<proteinExistence type="inferred from homology"/>
<sequence>MPARASRPAPGLPARAGLGFKPEHYATLVEQPPDLGFFEIHAENYMVPGGPAHAQLAWLRERYAISVHGVGLSLGGHDPLDARLLAGHRQLQRRYAPDSISEHLAWSRHDGRYFNDLLPIVYDDAALRRVCAHIDQFQQCLGQPILLENPATYVRFEASHIDEAQFLCELVARTGCGLLLDVNNVYVSAVNHGFDARAYLARLPLAAVGEIHLAGHARQRDAHGRAVLIDSHDAPVDEAVWDLYEYTLALTGPVATLLERDGNIPPLAALLAETGRVAACLARGLALAA</sequence>